<organism>
    <name type="scientific">Desulfosudis oleivorans (strain DSM 6200 / JCM 39069 / Hxd3)</name>
    <name type="common">Desulfococcus oleovorans</name>
    <dbReference type="NCBI Taxonomy" id="96561"/>
    <lineage>
        <taxon>Bacteria</taxon>
        <taxon>Pseudomonadati</taxon>
        <taxon>Thermodesulfobacteriota</taxon>
        <taxon>Desulfobacteria</taxon>
        <taxon>Desulfobacterales</taxon>
        <taxon>Desulfosudaceae</taxon>
        <taxon>Desulfosudis</taxon>
    </lineage>
</organism>
<evidence type="ECO:0000255" key="1">
    <source>
        <dbReference type="HAMAP-Rule" id="MF_00558"/>
    </source>
</evidence>
<reference key="1">
    <citation type="submission" date="2007-10" db="EMBL/GenBank/DDBJ databases">
        <title>Complete sequence of Desulfococcus oleovorans Hxd3.</title>
        <authorList>
            <consortium name="US DOE Joint Genome Institute"/>
            <person name="Copeland A."/>
            <person name="Lucas S."/>
            <person name="Lapidus A."/>
            <person name="Barry K."/>
            <person name="Glavina del Rio T."/>
            <person name="Dalin E."/>
            <person name="Tice H."/>
            <person name="Pitluck S."/>
            <person name="Kiss H."/>
            <person name="Brettin T."/>
            <person name="Bruce D."/>
            <person name="Detter J.C."/>
            <person name="Han C."/>
            <person name="Schmutz J."/>
            <person name="Larimer F."/>
            <person name="Land M."/>
            <person name="Hauser L."/>
            <person name="Kyrpides N."/>
            <person name="Kim E."/>
            <person name="Wawrik B."/>
            <person name="Richardson P."/>
        </authorList>
    </citation>
    <scope>NUCLEOTIDE SEQUENCE [LARGE SCALE GENOMIC DNA]</scope>
    <source>
        <strain>DSM 6200 / JCM 39069 / Hxd3</strain>
    </source>
</reference>
<gene>
    <name evidence="1" type="primary">sucC</name>
    <name type="ordered locus">Dole_0074</name>
</gene>
<comment type="function">
    <text evidence="1">Succinyl-CoA synthetase functions in the citric acid cycle (TCA), coupling the hydrolysis of succinyl-CoA to the synthesis of either ATP or GTP and thus represents the only step of substrate-level phosphorylation in the TCA. The beta subunit provides nucleotide specificity of the enzyme and binds the substrate succinate, while the binding sites for coenzyme A and phosphate are found in the alpha subunit.</text>
</comment>
<comment type="catalytic activity">
    <reaction evidence="1">
        <text>succinate + ATP + CoA = succinyl-CoA + ADP + phosphate</text>
        <dbReference type="Rhea" id="RHEA:17661"/>
        <dbReference type="ChEBI" id="CHEBI:30031"/>
        <dbReference type="ChEBI" id="CHEBI:30616"/>
        <dbReference type="ChEBI" id="CHEBI:43474"/>
        <dbReference type="ChEBI" id="CHEBI:57287"/>
        <dbReference type="ChEBI" id="CHEBI:57292"/>
        <dbReference type="ChEBI" id="CHEBI:456216"/>
        <dbReference type="EC" id="6.2.1.5"/>
    </reaction>
    <physiologicalReaction direction="right-to-left" evidence="1">
        <dbReference type="Rhea" id="RHEA:17663"/>
    </physiologicalReaction>
</comment>
<comment type="catalytic activity">
    <reaction evidence="1">
        <text>GTP + succinate + CoA = succinyl-CoA + GDP + phosphate</text>
        <dbReference type="Rhea" id="RHEA:22120"/>
        <dbReference type="ChEBI" id="CHEBI:30031"/>
        <dbReference type="ChEBI" id="CHEBI:37565"/>
        <dbReference type="ChEBI" id="CHEBI:43474"/>
        <dbReference type="ChEBI" id="CHEBI:57287"/>
        <dbReference type="ChEBI" id="CHEBI:57292"/>
        <dbReference type="ChEBI" id="CHEBI:58189"/>
    </reaction>
    <physiologicalReaction direction="right-to-left" evidence="1">
        <dbReference type="Rhea" id="RHEA:22122"/>
    </physiologicalReaction>
</comment>
<comment type="cofactor">
    <cofactor evidence="1">
        <name>Mg(2+)</name>
        <dbReference type="ChEBI" id="CHEBI:18420"/>
    </cofactor>
    <text evidence="1">Binds 1 Mg(2+) ion per subunit.</text>
</comment>
<comment type="pathway">
    <text evidence="1">Carbohydrate metabolism; tricarboxylic acid cycle; succinate from succinyl-CoA (ligase route): step 1/1.</text>
</comment>
<comment type="subunit">
    <text evidence="1">Heterotetramer of two alpha and two beta subunits.</text>
</comment>
<comment type="similarity">
    <text evidence="1">Belongs to the succinate/malate CoA ligase beta subunit family.</text>
</comment>
<keyword id="KW-0067">ATP-binding</keyword>
<keyword id="KW-0436">Ligase</keyword>
<keyword id="KW-0460">Magnesium</keyword>
<keyword id="KW-0479">Metal-binding</keyword>
<keyword id="KW-0547">Nucleotide-binding</keyword>
<keyword id="KW-1185">Reference proteome</keyword>
<keyword id="KW-0816">Tricarboxylic acid cycle</keyword>
<name>SUCC_DESOH</name>
<protein>
    <recommendedName>
        <fullName evidence="1">Succinate--CoA ligase [ADP-forming] subunit beta</fullName>
        <ecNumber evidence="1">6.2.1.5</ecNumber>
    </recommendedName>
    <alternativeName>
        <fullName evidence="1">Succinyl-CoA synthetase subunit beta</fullName>
        <shortName evidence="1">SCS-beta</shortName>
    </alternativeName>
</protein>
<feature type="chain" id="PRO_1000129181" description="Succinate--CoA ligase [ADP-forming] subunit beta">
    <location>
        <begin position="1"/>
        <end position="388"/>
    </location>
</feature>
<feature type="domain" description="ATP-grasp" evidence="1">
    <location>
        <begin position="9"/>
        <end position="244"/>
    </location>
</feature>
<feature type="binding site" evidence="1">
    <location>
        <position position="46"/>
    </location>
    <ligand>
        <name>ATP</name>
        <dbReference type="ChEBI" id="CHEBI:30616"/>
    </ligand>
</feature>
<feature type="binding site" evidence="1">
    <location>
        <begin position="53"/>
        <end position="55"/>
    </location>
    <ligand>
        <name>ATP</name>
        <dbReference type="ChEBI" id="CHEBI:30616"/>
    </ligand>
</feature>
<feature type="binding site" evidence="1">
    <location>
        <position position="99"/>
    </location>
    <ligand>
        <name>ATP</name>
        <dbReference type="ChEBI" id="CHEBI:30616"/>
    </ligand>
</feature>
<feature type="binding site" evidence="1">
    <location>
        <position position="102"/>
    </location>
    <ligand>
        <name>ATP</name>
        <dbReference type="ChEBI" id="CHEBI:30616"/>
    </ligand>
</feature>
<feature type="binding site" evidence="1">
    <location>
        <position position="107"/>
    </location>
    <ligand>
        <name>ATP</name>
        <dbReference type="ChEBI" id="CHEBI:30616"/>
    </ligand>
</feature>
<feature type="binding site" evidence="1">
    <location>
        <position position="199"/>
    </location>
    <ligand>
        <name>Mg(2+)</name>
        <dbReference type="ChEBI" id="CHEBI:18420"/>
    </ligand>
</feature>
<feature type="binding site" evidence="1">
    <location>
        <position position="213"/>
    </location>
    <ligand>
        <name>Mg(2+)</name>
        <dbReference type="ChEBI" id="CHEBI:18420"/>
    </ligand>
</feature>
<feature type="binding site" evidence="1">
    <location>
        <position position="264"/>
    </location>
    <ligand>
        <name>substrate</name>
        <note>ligand shared with subunit alpha</note>
    </ligand>
</feature>
<feature type="binding site" evidence="1">
    <location>
        <begin position="321"/>
        <end position="323"/>
    </location>
    <ligand>
        <name>substrate</name>
        <note>ligand shared with subunit alpha</note>
    </ligand>
</feature>
<dbReference type="EC" id="6.2.1.5" evidence="1"/>
<dbReference type="EMBL" id="CP000859">
    <property type="protein sequence ID" value="ABW65884.1"/>
    <property type="molecule type" value="Genomic_DNA"/>
</dbReference>
<dbReference type="RefSeq" id="WP_012173503.1">
    <property type="nucleotide sequence ID" value="NC_009943.1"/>
</dbReference>
<dbReference type="SMR" id="A8ZRW7"/>
<dbReference type="STRING" id="96561.Dole_0074"/>
<dbReference type="KEGG" id="dol:Dole_0074"/>
<dbReference type="eggNOG" id="COG0045">
    <property type="taxonomic scope" value="Bacteria"/>
</dbReference>
<dbReference type="HOGENOM" id="CLU_037430_0_2_7"/>
<dbReference type="OrthoDB" id="9802602at2"/>
<dbReference type="UniPathway" id="UPA00223">
    <property type="reaction ID" value="UER00999"/>
</dbReference>
<dbReference type="Proteomes" id="UP000008561">
    <property type="component" value="Chromosome"/>
</dbReference>
<dbReference type="GO" id="GO:0005829">
    <property type="term" value="C:cytosol"/>
    <property type="evidence" value="ECO:0007669"/>
    <property type="project" value="TreeGrafter"/>
</dbReference>
<dbReference type="GO" id="GO:0042709">
    <property type="term" value="C:succinate-CoA ligase complex"/>
    <property type="evidence" value="ECO:0007669"/>
    <property type="project" value="TreeGrafter"/>
</dbReference>
<dbReference type="GO" id="GO:0005524">
    <property type="term" value="F:ATP binding"/>
    <property type="evidence" value="ECO:0007669"/>
    <property type="project" value="UniProtKB-UniRule"/>
</dbReference>
<dbReference type="GO" id="GO:0000287">
    <property type="term" value="F:magnesium ion binding"/>
    <property type="evidence" value="ECO:0007669"/>
    <property type="project" value="UniProtKB-UniRule"/>
</dbReference>
<dbReference type="GO" id="GO:0004775">
    <property type="term" value="F:succinate-CoA ligase (ADP-forming) activity"/>
    <property type="evidence" value="ECO:0007669"/>
    <property type="project" value="UniProtKB-UniRule"/>
</dbReference>
<dbReference type="GO" id="GO:0004776">
    <property type="term" value="F:succinate-CoA ligase (GDP-forming) activity"/>
    <property type="evidence" value="ECO:0007669"/>
    <property type="project" value="RHEA"/>
</dbReference>
<dbReference type="GO" id="GO:0006104">
    <property type="term" value="P:succinyl-CoA metabolic process"/>
    <property type="evidence" value="ECO:0007669"/>
    <property type="project" value="TreeGrafter"/>
</dbReference>
<dbReference type="GO" id="GO:0006099">
    <property type="term" value="P:tricarboxylic acid cycle"/>
    <property type="evidence" value="ECO:0007669"/>
    <property type="project" value="UniProtKB-UniRule"/>
</dbReference>
<dbReference type="FunFam" id="3.30.1490.20:FF:000002">
    <property type="entry name" value="Succinate--CoA ligase [ADP-forming] subunit beta"/>
    <property type="match status" value="1"/>
</dbReference>
<dbReference type="FunFam" id="3.30.470.20:FF:000002">
    <property type="entry name" value="Succinate--CoA ligase [ADP-forming] subunit beta"/>
    <property type="match status" value="1"/>
</dbReference>
<dbReference type="FunFam" id="3.40.50.261:FF:000001">
    <property type="entry name" value="Succinate--CoA ligase [ADP-forming] subunit beta"/>
    <property type="match status" value="1"/>
</dbReference>
<dbReference type="Gene3D" id="3.30.1490.20">
    <property type="entry name" value="ATP-grasp fold, A domain"/>
    <property type="match status" value="1"/>
</dbReference>
<dbReference type="Gene3D" id="3.30.470.20">
    <property type="entry name" value="ATP-grasp fold, B domain"/>
    <property type="match status" value="1"/>
</dbReference>
<dbReference type="Gene3D" id="3.40.50.261">
    <property type="entry name" value="Succinyl-CoA synthetase domains"/>
    <property type="match status" value="1"/>
</dbReference>
<dbReference type="HAMAP" id="MF_00558">
    <property type="entry name" value="Succ_CoA_beta"/>
    <property type="match status" value="1"/>
</dbReference>
<dbReference type="InterPro" id="IPR011761">
    <property type="entry name" value="ATP-grasp"/>
</dbReference>
<dbReference type="InterPro" id="IPR013650">
    <property type="entry name" value="ATP-grasp_succ-CoA_synth-type"/>
</dbReference>
<dbReference type="InterPro" id="IPR013815">
    <property type="entry name" value="ATP_grasp_subdomain_1"/>
</dbReference>
<dbReference type="InterPro" id="IPR017866">
    <property type="entry name" value="Succ-CoA_synthase_bsu_CS"/>
</dbReference>
<dbReference type="InterPro" id="IPR005811">
    <property type="entry name" value="SUCC_ACL_C"/>
</dbReference>
<dbReference type="InterPro" id="IPR005809">
    <property type="entry name" value="Succ_CoA_ligase-like_bsu"/>
</dbReference>
<dbReference type="InterPro" id="IPR016102">
    <property type="entry name" value="Succinyl-CoA_synth-like"/>
</dbReference>
<dbReference type="NCBIfam" id="NF001913">
    <property type="entry name" value="PRK00696.1"/>
    <property type="match status" value="1"/>
</dbReference>
<dbReference type="NCBIfam" id="TIGR01016">
    <property type="entry name" value="sucCoAbeta"/>
    <property type="match status" value="1"/>
</dbReference>
<dbReference type="PANTHER" id="PTHR11815:SF10">
    <property type="entry name" value="SUCCINATE--COA LIGASE [GDP-FORMING] SUBUNIT BETA, MITOCHONDRIAL"/>
    <property type="match status" value="1"/>
</dbReference>
<dbReference type="PANTHER" id="PTHR11815">
    <property type="entry name" value="SUCCINYL-COA SYNTHETASE BETA CHAIN"/>
    <property type="match status" value="1"/>
</dbReference>
<dbReference type="Pfam" id="PF08442">
    <property type="entry name" value="ATP-grasp_2"/>
    <property type="match status" value="1"/>
</dbReference>
<dbReference type="Pfam" id="PF00549">
    <property type="entry name" value="Ligase_CoA"/>
    <property type="match status" value="1"/>
</dbReference>
<dbReference type="PIRSF" id="PIRSF001554">
    <property type="entry name" value="SucCS_beta"/>
    <property type="match status" value="1"/>
</dbReference>
<dbReference type="SUPFAM" id="SSF56059">
    <property type="entry name" value="Glutathione synthetase ATP-binding domain-like"/>
    <property type="match status" value="1"/>
</dbReference>
<dbReference type="SUPFAM" id="SSF52210">
    <property type="entry name" value="Succinyl-CoA synthetase domains"/>
    <property type="match status" value="1"/>
</dbReference>
<dbReference type="PROSITE" id="PS50975">
    <property type="entry name" value="ATP_GRASP"/>
    <property type="match status" value="1"/>
</dbReference>
<dbReference type="PROSITE" id="PS01217">
    <property type="entry name" value="SUCCINYL_COA_LIG_3"/>
    <property type="match status" value="1"/>
</dbReference>
<accession>A8ZRW7</accession>
<sequence>MKIHEFQTKELFRTYGIPTPEGRMVNTAEAAGEAAGELGGFPVVVKAQIHAGGRGKGGGVKLAKSADEAKSLAGAMLGSRLVTPQTGPEGTLVQKVLVEQGVSIAKELYLSVVADRETAGIVIMASEAGGMDIEAVAETTPEKILKVFVNPLAGLSAFHCRQAAYGLNLPAEAIKPFTQVVSGLFKLFVDYDASLVEINPLILTTDKAVMALDAKINFDDSALFRHKDILALRDTDEEDPLEVEASRFNLNYINMDGNVGNMVNGAGLAMATMDIIKLAGAEPANFLDVGGGANAEMVENGFRIILSDPKVKCILVNIFGGILRCDVLASGIVQAARNTAIHVPLVVRMEGTNVDEGKRILAESGLDLHSAASLKDAAARVAQVVAAA</sequence>
<proteinExistence type="inferred from homology"/>